<comment type="similarity">
    <text evidence="2">Belongs to the UDP-glycosyltransferase family.</text>
</comment>
<organism>
    <name type="scientific">Arabidopsis thaliana</name>
    <name type="common">Mouse-ear cress</name>
    <dbReference type="NCBI Taxonomy" id="3702"/>
    <lineage>
        <taxon>Eukaryota</taxon>
        <taxon>Viridiplantae</taxon>
        <taxon>Streptophyta</taxon>
        <taxon>Embryophyta</taxon>
        <taxon>Tracheophyta</taxon>
        <taxon>Spermatophyta</taxon>
        <taxon>Magnoliopsida</taxon>
        <taxon>eudicotyledons</taxon>
        <taxon>Gunneridae</taxon>
        <taxon>Pentapetalae</taxon>
        <taxon>rosids</taxon>
        <taxon>malvids</taxon>
        <taxon>Brassicales</taxon>
        <taxon>Brassicaceae</taxon>
        <taxon>Camelineae</taxon>
        <taxon>Arabidopsis</taxon>
    </lineage>
</organism>
<accession>O81010</accession>
<sequence length="442" mass="49624">MEPTFHAFMFPWFAFGHMIPFLHLANKLAEKGHQITFLLPKKAQKQLEHHNLFPDSIVFHPLTIPHVNGLPAGAETTSDISISMDNLLSEALDLTRDQVEAAVRALRPDLIFFDFAHWIPEIAKEHMIKSVSYMIVSATTIAYTFAPGGVLGVPPPGYPSSKVLYRENDAHALATLSIFYKRLYHQITTGFKSCDIIALRTCNEIEGKFCDYISSQYHKKVLLTGPMLPEQDTSKPLEEQLSHFLSRFPPRSVVFCALGSQIVLEKDQFQELCLGMELTGLPFLIAVKPPRGSSTVEEGLPEGFQERVKGRGVVWGGWVQQPLILDHPSIGCFVNHCGPGTIWECLMTDCQMVLLPFLGDQVLFTRLMTEEFKVSVEVSREKTGWFSKESLSDAIKSVMDKDSDLGKLVRSNHAKLKETLGSHGLLTGYVDKFVEELQEYLI</sequence>
<feature type="chain" id="PRO_0000409114" description="UDP-glycosyltransferase 79B8">
    <location>
        <begin position="1"/>
        <end position="442"/>
    </location>
</feature>
<feature type="binding site" evidence="1">
    <location>
        <position position="260"/>
    </location>
    <ligand>
        <name>UDP-alpha-D-glucose</name>
        <dbReference type="ChEBI" id="CHEBI:58885"/>
    </ligand>
</feature>
<feature type="binding site" evidence="1">
    <location>
        <begin position="319"/>
        <end position="321"/>
    </location>
    <ligand>
        <name>UDP-alpha-D-glucose</name>
        <dbReference type="ChEBI" id="CHEBI:58885"/>
    </ligand>
</feature>
<feature type="binding site" evidence="1">
    <location>
        <begin position="336"/>
        <end position="344"/>
    </location>
    <ligand>
        <name>UDP-alpha-D-glucose</name>
        <dbReference type="ChEBI" id="CHEBI:58885"/>
    </ligand>
</feature>
<feature type="binding site" evidence="1">
    <location>
        <begin position="358"/>
        <end position="361"/>
    </location>
    <ligand>
        <name>UDP-alpha-D-glucose</name>
        <dbReference type="ChEBI" id="CHEBI:58885"/>
    </ligand>
</feature>
<gene>
    <name type="primary">UGT79B8</name>
    <name type="ordered locus">At2g22930</name>
    <name type="ORF">T20K9.14</name>
</gene>
<keyword id="KW-0328">Glycosyltransferase</keyword>
<keyword id="KW-1185">Reference proteome</keyword>
<keyword id="KW-0808">Transferase</keyword>
<protein>
    <recommendedName>
        <fullName>UDP-glycosyltransferase 79B8</fullName>
        <ecNumber>2.4.1.-</ecNumber>
    </recommendedName>
</protein>
<name>U79B8_ARATH</name>
<dbReference type="EC" id="2.4.1.-"/>
<dbReference type="EMBL" id="AC004786">
    <property type="protein sequence ID" value="AAC32440.1"/>
    <property type="molecule type" value="Genomic_DNA"/>
</dbReference>
<dbReference type="EMBL" id="CP002685">
    <property type="protein sequence ID" value="AEC07376.1"/>
    <property type="molecule type" value="Genomic_DNA"/>
</dbReference>
<dbReference type="EMBL" id="BT005828">
    <property type="protein sequence ID" value="AAO64763.1"/>
    <property type="molecule type" value="mRNA"/>
</dbReference>
<dbReference type="EMBL" id="AK227622">
    <property type="protein sequence ID" value="BAE99613.1"/>
    <property type="molecule type" value="mRNA"/>
</dbReference>
<dbReference type="PIR" id="F84618">
    <property type="entry name" value="F84618"/>
</dbReference>
<dbReference type="RefSeq" id="NP_179877.1">
    <property type="nucleotide sequence ID" value="NM_127858.3"/>
</dbReference>
<dbReference type="SMR" id="O81010"/>
<dbReference type="BioGRID" id="2177">
    <property type="interactions" value="1"/>
</dbReference>
<dbReference type="FunCoup" id="O81010">
    <property type="interactions" value="71"/>
</dbReference>
<dbReference type="IntAct" id="O81010">
    <property type="interactions" value="1"/>
</dbReference>
<dbReference type="STRING" id="3702.O81010"/>
<dbReference type="CAZy" id="GT1">
    <property type="family name" value="Glycosyltransferase Family 1"/>
</dbReference>
<dbReference type="PaxDb" id="3702-AT2G22930.1"/>
<dbReference type="ProteomicsDB" id="228732"/>
<dbReference type="EnsemblPlants" id="AT2G22930.1">
    <property type="protein sequence ID" value="AT2G22930.1"/>
    <property type="gene ID" value="AT2G22930"/>
</dbReference>
<dbReference type="GeneID" id="816824"/>
<dbReference type="Gramene" id="AT2G22930.1">
    <property type="protein sequence ID" value="AT2G22930.1"/>
    <property type="gene ID" value="AT2G22930"/>
</dbReference>
<dbReference type="KEGG" id="ath:AT2G22930"/>
<dbReference type="Araport" id="AT2G22930"/>
<dbReference type="TAIR" id="AT2G22930"/>
<dbReference type="eggNOG" id="KOG1192">
    <property type="taxonomic scope" value="Eukaryota"/>
</dbReference>
<dbReference type="HOGENOM" id="CLU_001724_2_3_1"/>
<dbReference type="InParanoid" id="O81010"/>
<dbReference type="OMA" id="LICIRTC"/>
<dbReference type="PhylomeDB" id="O81010"/>
<dbReference type="BioCyc" id="ARA:AT2G22930-MONOMER"/>
<dbReference type="PRO" id="PR:O81010"/>
<dbReference type="Proteomes" id="UP000006548">
    <property type="component" value="Chromosome 2"/>
</dbReference>
<dbReference type="ExpressionAtlas" id="O81010">
    <property type="expression patterns" value="baseline and differential"/>
</dbReference>
<dbReference type="GO" id="GO:0035251">
    <property type="term" value="F:UDP-glucosyltransferase activity"/>
    <property type="evidence" value="ECO:0007669"/>
    <property type="project" value="InterPro"/>
</dbReference>
<dbReference type="CDD" id="cd03784">
    <property type="entry name" value="GT1_Gtf-like"/>
    <property type="match status" value="1"/>
</dbReference>
<dbReference type="FunFam" id="3.40.50.2000:FF:000037">
    <property type="entry name" value="Glycosyltransferase"/>
    <property type="match status" value="1"/>
</dbReference>
<dbReference type="FunFam" id="3.40.50.2000:FF:000087">
    <property type="entry name" value="Glycosyltransferase"/>
    <property type="match status" value="1"/>
</dbReference>
<dbReference type="Gene3D" id="3.40.50.2000">
    <property type="entry name" value="Glycogen Phosphorylase B"/>
    <property type="match status" value="2"/>
</dbReference>
<dbReference type="InterPro" id="IPR050481">
    <property type="entry name" value="UDP-glycosyltransf_plant"/>
</dbReference>
<dbReference type="InterPro" id="IPR002213">
    <property type="entry name" value="UDP_glucos_trans"/>
</dbReference>
<dbReference type="PANTHER" id="PTHR48049">
    <property type="entry name" value="GLYCOSYLTRANSFERASE"/>
    <property type="match status" value="1"/>
</dbReference>
<dbReference type="PANTHER" id="PTHR48049:SF91">
    <property type="entry name" value="UDP-GLYCOSYLTRANSFERASE 79B7-RELATED"/>
    <property type="match status" value="1"/>
</dbReference>
<dbReference type="Pfam" id="PF00201">
    <property type="entry name" value="UDPGT"/>
    <property type="match status" value="1"/>
</dbReference>
<dbReference type="SUPFAM" id="SSF53756">
    <property type="entry name" value="UDP-Glycosyltransferase/glycogen phosphorylase"/>
    <property type="match status" value="1"/>
</dbReference>
<proteinExistence type="evidence at transcript level"/>
<reference key="1">
    <citation type="journal article" date="1999" name="Nature">
        <title>Sequence and analysis of chromosome 2 of the plant Arabidopsis thaliana.</title>
        <authorList>
            <person name="Lin X."/>
            <person name="Kaul S."/>
            <person name="Rounsley S.D."/>
            <person name="Shea T.P."/>
            <person name="Benito M.-I."/>
            <person name="Town C.D."/>
            <person name="Fujii C.Y."/>
            <person name="Mason T.M."/>
            <person name="Bowman C.L."/>
            <person name="Barnstead M.E."/>
            <person name="Feldblyum T.V."/>
            <person name="Buell C.R."/>
            <person name="Ketchum K.A."/>
            <person name="Lee J.J."/>
            <person name="Ronning C.M."/>
            <person name="Koo H.L."/>
            <person name="Moffat K.S."/>
            <person name="Cronin L.A."/>
            <person name="Shen M."/>
            <person name="Pai G."/>
            <person name="Van Aken S."/>
            <person name="Umayam L."/>
            <person name="Tallon L.J."/>
            <person name="Gill J.E."/>
            <person name="Adams M.D."/>
            <person name="Carrera A.J."/>
            <person name="Creasy T.H."/>
            <person name="Goodman H.M."/>
            <person name="Somerville C.R."/>
            <person name="Copenhaver G.P."/>
            <person name="Preuss D."/>
            <person name="Nierman W.C."/>
            <person name="White O."/>
            <person name="Eisen J.A."/>
            <person name="Salzberg S.L."/>
            <person name="Fraser C.M."/>
            <person name="Venter J.C."/>
        </authorList>
    </citation>
    <scope>NUCLEOTIDE SEQUENCE [LARGE SCALE GENOMIC DNA]</scope>
    <source>
        <strain>cv. Columbia</strain>
    </source>
</reference>
<reference key="2">
    <citation type="journal article" date="2017" name="Plant J.">
        <title>Araport11: a complete reannotation of the Arabidopsis thaliana reference genome.</title>
        <authorList>
            <person name="Cheng C.Y."/>
            <person name="Krishnakumar V."/>
            <person name="Chan A.P."/>
            <person name="Thibaud-Nissen F."/>
            <person name="Schobel S."/>
            <person name="Town C.D."/>
        </authorList>
    </citation>
    <scope>GENOME REANNOTATION</scope>
    <source>
        <strain>cv. Columbia</strain>
    </source>
</reference>
<reference key="3">
    <citation type="journal article" date="2003" name="Science">
        <title>Empirical analysis of transcriptional activity in the Arabidopsis genome.</title>
        <authorList>
            <person name="Yamada K."/>
            <person name="Lim J."/>
            <person name="Dale J.M."/>
            <person name="Chen H."/>
            <person name="Shinn P."/>
            <person name="Palm C.J."/>
            <person name="Southwick A.M."/>
            <person name="Wu H.C."/>
            <person name="Kim C.J."/>
            <person name="Nguyen M."/>
            <person name="Pham P.K."/>
            <person name="Cheuk R.F."/>
            <person name="Karlin-Newmann G."/>
            <person name="Liu S.X."/>
            <person name="Lam B."/>
            <person name="Sakano H."/>
            <person name="Wu T."/>
            <person name="Yu G."/>
            <person name="Miranda M."/>
            <person name="Quach H.L."/>
            <person name="Tripp M."/>
            <person name="Chang C.H."/>
            <person name="Lee J.M."/>
            <person name="Toriumi M.J."/>
            <person name="Chan M.M."/>
            <person name="Tang C.C."/>
            <person name="Onodera C.S."/>
            <person name="Deng J.M."/>
            <person name="Akiyama K."/>
            <person name="Ansari Y."/>
            <person name="Arakawa T."/>
            <person name="Banh J."/>
            <person name="Banno F."/>
            <person name="Bowser L."/>
            <person name="Brooks S.Y."/>
            <person name="Carninci P."/>
            <person name="Chao Q."/>
            <person name="Choy N."/>
            <person name="Enju A."/>
            <person name="Goldsmith A.D."/>
            <person name="Gurjal M."/>
            <person name="Hansen N.F."/>
            <person name="Hayashizaki Y."/>
            <person name="Johnson-Hopson C."/>
            <person name="Hsuan V.W."/>
            <person name="Iida K."/>
            <person name="Karnes M."/>
            <person name="Khan S."/>
            <person name="Koesema E."/>
            <person name="Ishida J."/>
            <person name="Jiang P.X."/>
            <person name="Jones T."/>
            <person name="Kawai J."/>
            <person name="Kamiya A."/>
            <person name="Meyers C."/>
            <person name="Nakajima M."/>
            <person name="Narusaka M."/>
            <person name="Seki M."/>
            <person name="Sakurai T."/>
            <person name="Satou M."/>
            <person name="Tamse R."/>
            <person name="Vaysberg M."/>
            <person name="Wallender E.K."/>
            <person name="Wong C."/>
            <person name="Yamamura Y."/>
            <person name="Yuan S."/>
            <person name="Shinozaki K."/>
            <person name="Davis R.W."/>
            <person name="Theologis A."/>
            <person name="Ecker J.R."/>
        </authorList>
    </citation>
    <scope>NUCLEOTIDE SEQUENCE [LARGE SCALE MRNA]</scope>
    <source>
        <strain>cv. Columbia</strain>
    </source>
</reference>
<reference key="4">
    <citation type="submission" date="2006-07" db="EMBL/GenBank/DDBJ databases">
        <title>Large-scale analysis of RIKEN Arabidopsis full-length (RAFL) cDNAs.</title>
        <authorList>
            <person name="Totoki Y."/>
            <person name="Seki M."/>
            <person name="Ishida J."/>
            <person name="Nakajima M."/>
            <person name="Enju A."/>
            <person name="Kamiya A."/>
            <person name="Narusaka M."/>
            <person name="Shin-i T."/>
            <person name="Nakagawa M."/>
            <person name="Sakamoto N."/>
            <person name="Oishi K."/>
            <person name="Kohara Y."/>
            <person name="Kobayashi M."/>
            <person name="Toyoda A."/>
            <person name="Sakaki Y."/>
            <person name="Sakurai T."/>
            <person name="Iida K."/>
            <person name="Akiyama K."/>
            <person name="Satou M."/>
            <person name="Toyoda T."/>
            <person name="Konagaya A."/>
            <person name="Carninci P."/>
            <person name="Kawai J."/>
            <person name="Hayashizaki Y."/>
            <person name="Shinozaki K."/>
        </authorList>
    </citation>
    <scope>NUCLEOTIDE SEQUENCE [LARGE SCALE MRNA]</scope>
    <source>
        <strain>cv. Columbia</strain>
    </source>
</reference>
<reference key="5">
    <citation type="journal article" date="2001" name="J. Biol. Chem.">
        <title>Phylogenetic analysis of the UDP-glycosyltransferase multigene family of Arabidopsis thaliana.</title>
        <authorList>
            <person name="Li Y."/>
            <person name="Baldauf S."/>
            <person name="Lim E.K."/>
            <person name="Bowles D.J."/>
        </authorList>
    </citation>
    <scope>GENE FAMILY</scope>
</reference>
<evidence type="ECO:0000250" key="1"/>
<evidence type="ECO:0000305" key="2"/>